<dbReference type="EMBL" id="CR380959">
    <property type="protein sequence ID" value="CAG62357.1"/>
    <property type="molecule type" value="Genomic_DNA"/>
</dbReference>
<dbReference type="RefSeq" id="XP_449381.1">
    <property type="nucleotide sequence ID" value="XM_449381.1"/>
</dbReference>
<dbReference type="SMR" id="Q6FK63"/>
<dbReference type="FunCoup" id="Q6FK63">
    <property type="interactions" value="1500"/>
</dbReference>
<dbReference type="STRING" id="284593.Q6FK63"/>
<dbReference type="EnsemblFungi" id="CAGL0M00814g-T">
    <property type="protein sequence ID" value="CAGL0M00814g-T-p1"/>
    <property type="gene ID" value="CAGL0M00814g"/>
</dbReference>
<dbReference type="KEGG" id="cgr:2891604"/>
<dbReference type="CGD" id="CAL0137117">
    <property type="gene designation" value="CAGL0M00814g"/>
</dbReference>
<dbReference type="VEuPathDB" id="FungiDB:B1J91_M00814g"/>
<dbReference type="VEuPathDB" id="FungiDB:CAGL0M00814g"/>
<dbReference type="eggNOG" id="KOG1628">
    <property type="taxonomic scope" value="Eukaryota"/>
</dbReference>
<dbReference type="HOGENOM" id="CLU_062507_0_0_1"/>
<dbReference type="InParanoid" id="Q6FK63"/>
<dbReference type="OMA" id="TRFKGHE"/>
<dbReference type="Proteomes" id="UP000002428">
    <property type="component" value="Chromosome M"/>
</dbReference>
<dbReference type="GO" id="GO:0022627">
    <property type="term" value="C:cytosolic small ribosomal subunit"/>
    <property type="evidence" value="ECO:0007669"/>
    <property type="project" value="UniProtKB-UniRule"/>
</dbReference>
<dbReference type="GO" id="GO:0062040">
    <property type="term" value="C:fungal biofilm matrix"/>
    <property type="evidence" value="ECO:0000314"/>
    <property type="project" value="CGD"/>
</dbReference>
<dbReference type="GO" id="GO:0003735">
    <property type="term" value="F:structural constituent of ribosome"/>
    <property type="evidence" value="ECO:0007669"/>
    <property type="project" value="UniProtKB-UniRule"/>
</dbReference>
<dbReference type="GO" id="GO:0006412">
    <property type="term" value="P:translation"/>
    <property type="evidence" value="ECO:0007669"/>
    <property type="project" value="UniProtKB-UniRule"/>
</dbReference>
<dbReference type="HAMAP" id="MF_03122">
    <property type="entry name" value="Ribosomal_eS1_euk"/>
    <property type="match status" value="1"/>
</dbReference>
<dbReference type="InterPro" id="IPR001593">
    <property type="entry name" value="Ribosomal_eS1"/>
</dbReference>
<dbReference type="InterPro" id="IPR018281">
    <property type="entry name" value="Ribosomal_eS1_CS"/>
</dbReference>
<dbReference type="InterPro" id="IPR027500">
    <property type="entry name" value="Ribosomal_eS1_euk"/>
</dbReference>
<dbReference type="PANTHER" id="PTHR11830">
    <property type="entry name" value="40S RIBOSOMAL PROTEIN S3A"/>
    <property type="match status" value="1"/>
</dbReference>
<dbReference type="Pfam" id="PF01015">
    <property type="entry name" value="Ribosomal_S3Ae"/>
    <property type="match status" value="1"/>
</dbReference>
<dbReference type="SMART" id="SM01397">
    <property type="entry name" value="Ribosomal_S3Ae"/>
    <property type="match status" value="1"/>
</dbReference>
<dbReference type="PROSITE" id="PS01191">
    <property type="entry name" value="RIBOSOMAL_S3AE"/>
    <property type="match status" value="1"/>
</dbReference>
<protein>
    <recommendedName>
        <fullName evidence="1">Small ribosomal subunit protein eS1</fullName>
    </recommendedName>
    <alternativeName>
        <fullName evidence="2">40S ribosomal protein S1</fullName>
    </alternativeName>
</protein>
<reference key="1">
    <citation type="journal article" date="2004" name="Nature">
        <title>Genome evolution in yeasts.</title>
        <authorList>
            <person name="Dujon B."/>
            <person name="Sherman D."/>
            <person name="Fischer G."/>
            <person name="Durrens P."/>
            <person name="Casaregola S."/>
            <person name="Lafontaine I."/>
            <person name="de Montigny J."/>
            <person name="Marck C."/>
            <person name="Neuveglise C."/>
            <person name="Talla E."/>
            <person name="Goffard N."/>
            <person name="Frangeul L."/>
            <person name="Aigle M."/>
            <person name="Anthouard V."/>
            <person name="Babour A."/>
            <person name="Barbe V."/>
            <person name="Barnay S."/>
            <person name="Blanchin S."/>
            <person name="Beckerich J.-M."/>
            <person name="Beyne E."/>
            <person name="Bleykasten C."/>
            <person name="Boisrame A."/>
            <person name="Boyer J."/>
            <person name="Cattolico L."/>
            <person name="Confanioleri F."/>
            <person name="de Daruvar A."/>
            <person name="Despons L."/>
            <person name="Fabre E."/>
            <person name="Fairhead C."/>
            <person name="Ferry-Dumazet H."/>
            <person name="Groppi A."/>
            <person name="Hantraye F."/>
            <person name="Hennequin C."/>
            <person name="Jauniaux N."/>
            <person name="Joyet P."/>
            <person name="Kachouri R."/>
            <person name="Kerrest A."/>
            <person name="Koszul R."/>
            <person name="Lemaire M."/>
            <person name="Lesur I."/>
            <person name="Ma L."/>
            <person name="Muller H."/>
            <person name="Nicaud J.-M."/>
            <person name="Nikolski M."/>
            <person name="Oztas S."/>
            <person name="Ozier-Kalogeropoulos O."/>
            <person name="Pellenz S."/>
            <person name="Potier S."/>
            <person name="Richard G.-F."/>
            <person name="Straub M.-L."/>
            <person name="Suleau A."/>
            <person name="Swennen D."/>
            <person name="Tekaia F."/>
            <person name="Wesolowski-Louvel M."/>
            <person name="Westhof E."/>
            <person name="Wirth B."/>
            <person name="Zeniou-Meyer M."/>
            <person name="Zivanovic Y."/>
            <person name="Bolotin-Fukuhara M."/>
            <person name="Thierry A."/>
            <person name="Bouchier C."/>
            <person name="Caudron B."/>
            <person name="Scarpelli C."/>
            <person name="Gaillardin C."/>
            <person name="Weissenbach J."/>
            <person name="Wincker P."/>
            <person name="Souciet J.-L."/>
        </authorList>
    </citation>
    <scope>NUCLEOTIDE SEQUENCE [LARGE SCALE GENOMIC DNA]</scope>
    <source>
        <strain>ATCC 2001 / BCRC 20586 / JCM 3761 / NBRC 0622 / NRRL Y-65 / CBS 138</strain>
    </source>
</reference>
<name>RS3A_CANGA</name>
<comment type="subunit">
    <text evidence="1">Component of the small ribosomal subunit. Mature ribosomes consist of a small (40S) and a large (60S) subunit. The 40S subunit contains about 33 different proteins and 1 molecule of RNA (18S). The 60S subunit contains about 49 different proteins and 3 molecules of RNA (25S, 5.8S and 5S).</text>
</comment>
<comment type="subcellular location">
    <subcellularLocation>
        <location evidence="1">Cytoplasm</location>
    </subcellularLocation>
</comment>
<comment type="similarity">
    <text evidence="1">Belongs to the eukaryotic ribosomal protein eS1 family.</text>
</comment>
<proteinExistence type="inferred from homology"/>
<gene>
    <name evidence="1" type="primary">RPS1</name>
    <name type="ordered locus">CAGL0M00814g</name>
</gene>
<organism>
    <name type="scientific">Candida glabrata (strain ATCC 2001 / BCRC 20586 / JCM 3761 / NBRC 0622 / NRRL Y-65 / CBS 138)</name>
    <name type="common">Yeast</name>
    <name type="synonym">Nakaseomyces glabratus</name>
    <dbReference type="NCBI Taxonomy" id="284593"/>
    <lineage>
        <taxon>Eukaryota</taxon>
        <taxon>Fungi</taxon>
        <taxon>Dikarya</taxon>
        <taxon>Ascomycota</taxon>
        <taxon>Saccharomycotina</taxon>
        <taxon>Saccharomycetes</taxon>
        <taxon>Saccharomycetales</taxon>
        <taxon>Saccharomycetaceae</taxon>
        <taxon>Nakaseomyces</taxon>
    </lineage>
</organism>
<keyword id="KW-0007">Acetylation</keyword>
<keyword id="KW-0963">Cytoplasm</keyword>
<keyword id="KW-1185">Reference proteome</keyword>
<keyword id="KW-0687">Ribonucleoprotein</keyword>
<keyword id="KW-0689">Ribosomal protein</keyword>
<accession>Q6FK63</accession>
<evidence type="ECO:0000255" key="1">
    <source>
        <dbReference type="HAMAP-Rule" id="MF_03122"/>
    </source>
</evidence>
<evidence type="ECO:0000305" key="2"/>
<sequence>MAVGKNKRLSKGKKGLKKKVVDPFTRKEWYDIKAPSTFENRNVGKTLVNKSTGLKSASDALKGRVVEVCLADLQGSEDHSFRKVKLRVDDVQGKNLLTNFHGMDFTADKLRSMVRKWQTLIEANVTVKTSDEYIIRVFAIAFTRKQSNQVKRTAYAQSSHIRAIRKVISDILTREVSNSTLAQFTSKLIPEVINKEIENATKDIFPLQNVHIRKVKLLKQPKFDLGSLMALHGEGSAEEKGKKVSGFKDEVLETV</sequence>
<feature type="initiator methionine" description="Removed" evidence="1">
    <location>
        <position position="1"/>
    </location>
</feature>
<feature type="chain" id="PRO_0000389365" description="Small ribosomal subunit protein eS1">
    <location>
        <begin position="2"/>
        <end position="255"/>
    </location>
</feature>
<feature type="modified residue" description="N-acetylalanine; partial" evidence="1">
    <location>
        <position position="2"/>
    </location>
</feature>